<dbReference type="EC" id="2.7.7.6" evidence="1"/>
<dbReference type="EMBL" id="CP000958">
    <property type="protein sequence ID" value="ACA89533.1"/>
    <property type="molecule type" value="Genomic_DNA"/>
</dbReference>
<dbReference type="RefSeq" id="WP_006477176.1">
    <property type="nucleotide sequence ID" value="NC_010508.1"/>
</dbReference>
<dbReference type="SMR" id="B1JU48"/>
<dbReference type="GeneID" id="98107134"/>
<dbReference type="KEGG" id="bcm:Bcenmc03_0353"/>
<dbReference type="HOGENOM" id="CLU_053084_0_0_4"/>
<dbReference type="Proteomes" id="UP000002169">
    <property type="component" value="Chromosome 1"/>
</dbReference>
<dbReference type="GO" id="GO:0005737">
    <property type="term" value="C:cytoplasm"/>
    <property type="evidence" value="ECO:0007669"/>
    <property type="project" value="UniProtKB-ARBA"/>
</dbReference>
<dbReference type="GO" id="GO:0000428">
    <property type="term" value="C:DNA-directed RNA polymerase complex"/>
    <property type="evidence" value="ECO:0007669"/>
    <property type="project" value="UniProtKB-KW"/>
</dbReference>
<dbReference type="GO" id="GO:0003677">
    <property type="term" value="F:DNA binding"/>
    <property type="evidence" value="ECO:0007669"/>
    <property type="project" value="UniProtKB-UniRule"/>
</dbReference>
<dbReference type="GO" id="GO:0003899">
    <property type="term" value="F:DNA-directed RNA polymerase activity"/>
    <property type="evidence" value="ECO:0007669"/>
    <property type="project" value="UniProtKB-UniRule"/>
</dbReference>
<dbReference type="GO" id="GO:0046983">
    <property type="term" value="F:protein dimerization activity"/>
    <property type="evidence" value="ECO:0007669"/>
    <property type="project" value="InterPro"/>
</dbReference>
<dbReference type="GO" id="GO:0006351">
    <property type="term" value="P:DNA-templated transcription"/>
    <property type="evidence" value="ECO:0007669"/>
    <property type="project" value="UniProtKB-UniRule"/>
</dbReference>
<dbReference type="CDD" id="cd06928">
    <property type="entry name" value="RNAP_alpha_NTD"/>
    <property type="match status" value="1"/>
</dbReference>
<dbReference type="FunFam" id="1.10.150.20:FF:000001">
    <property type="entry name" value="DNA-directed RNA polymerase subunit alpha"/>
    <property type="match status" value="1"/>
</dbReference>
<dbReference type="FunFam" id="2.170.120.12:FF:000001">
    <property type="entry name" value="DNA-directed RNA polymerase subunit alpha"/>
    <property type="match status" value="1"/>
</dbReference>
<dbReference type="Gene3D" id="1.10.150.20">
    <property type="entry name" value="5' to 3' exonuclease, C-terminal subdomain"/>
    <property type="match status" value="1"/>
</dbReference>
<dbReference type="Gene3D" id="2.170.120.12">
    <property type="entry name" value="DNA-directed RNA polymerase, insert domain"/>
    <property type="match status" value="1"/>
</dbReference>
<dbReference type="Gene3D" id="3.30.1360.10">
    <property type="entry name" value="RNA polymerase, RBP11-like subunit"/>
    <property type="match status" value="1"/>
</dbReference>
<dbReference type="HAMAP" id="MF_00059">
    <property type="entry name" value="RNApol_bact_RpoA"/>
    <property type="match status" value="1"/>
</dbReference>
<dbReference type="InterPro" id="IPR011262">
    <property type="entry name" value="DNA-dir_RNA_pol_insert"/>
</dbReference>
<dbReference type="InterPro" id="IPR011263">
    <property type="entry name" value="DNA-dir_RNA_pol_RpoA/D/Rpb3"/>
</dbReference>
<dbReference type="InterPro" id="IPR011773">
    <property type="entry name" value="DNA-dir_RpoA"/>
</dbReference>
<dbReference type="InterPro" id="IPR036603">
    <property type="entry name" value="RBP11-like"/>
</dbReference>
<dbReference type="InterPro" id="IPR011260">
    <property type="entry name" value="RNAP_asu_C"/>
</dbReference>
<dbReference type="InterPro" id="IPR036643">
    <property type="entry name" value="RNApol_insert_sf"/>
</dbReference>
<dbReference type="NCBIfam" id="NF003513">
    <property type="entry name" value="PRK05182.1-2"/>
    <property type="match status" value="1"/>
</dbReference>
<dbReference type="NCBIfam" id="NF003519">
    <property type="entry name" value="PRK05182.2-5"/>
    <property type="match status" value="1"/>
</dbReference>
<dbReference type="NCBIfam" id="TIGR02027">
    <property type="entry name" value="rpoA"/>
    <property type="match status" value="1"/>
</dbReference>
<dbReference type="Pfam" id="PF01000">
    <property type="entry name" value="RNA_pol_A_bac"/>
    <property type="match status" value="1"/>
</dbReference>
<dbReference type="Pfam" id="PF03118">
    <property type="entry name" value="RNA_pol_A_CTD"/>
    <property type="match status" value="1"/>
</dbReference>
<dbReference type="Pfam" id="PF01193">
    <property type="entry name" value="RNA_pol_L"/>
    <property type="match status" value="1"/>
</dbReference>
<dbReference type="SMART" id="SM00662">
    <property type="entry name" value="RPOLD"/>
    <property type="match status" value="1"/>
</dbReference>
<dbReference type="SUPFAM" id="SSF47789">
    <property type="entry name" value="C-terminal domain of RNA polymerase alpha subunit"/>
    <property type="match status" value="1"/>
</dbReference>
<dbReference type="SUPFAM" id="SSF56553">
    <property type="entry name" value="Insert subdomain of RNA polymerase alpha subunit"/>
    <property type="match status" value="1"/>
</dbReference>
<dbReference type="SUPFAM" id="SSF55257">
    <property type="entry name" value="RBP11-like subunits of RNA polymerase"/>
    <property type="match status" value="1"/>
</dbReference>
<evidence type="ECO:0000255" key="1">
    <source>
        <dbReference type="HAMAP-Rule" id="MF_00059"/>
    </source>
</evidence>
<reference key="1">
    <citation type="submission" date="2008-02" db="EMBL/GenBank/DDBJ databases">
        <title>Complete sequence of chromosome 1 of Burkholderia cenocepacia MC0-3.</title>
        <authorList>
            <person name="Copeland A."/>
            <person name="Lucas S."/>
            <person name="Lapidus A."/>
            <person name="Barry K."/>
            <person name="Bruce D."/>
            <person name="Goodwin L."/>
            <person name="Glavina del Rio T."/>
            <person name="Dalin E."/>
            <person name="Tice H."/>
            <person name="Pitluck S."/>
            <person name="Chain P."/>
            <person name="Malfatti S."/>
            <person name="Shin M."/>
            <person name="Vergez L."/>
            <person name="Schmutz J."/>
            <person name="Larimer F."/>
            <person name="Land M."/>
            <person name="Hauser L."/>
            <person name="Kyrpides N."/>
            <person name="Mikhailova N."/>
            <person name="Tiedje J."/>
            <person name="Richardson P."/>
        </authorList>
    </citation>
    <scope>NUCLEOTIDE SEQUENCE [LARGE SCALE GENOMIC DNA]</scope>
    <source>
        <strain>MC0-3</strain>
    </source>
</reference>
<name>RPOA_BURO0</name>
<protein>
    <recommendedName>
        <fullName evidence="1">DNA-directed RNA polymerase subunit alpha</fullName>
        <shortName evidence="1">RNAP subunit alpha</shortName>
        <ecNumber evidence="1">2.7.7.6</ecNumber>
    </recommendedName>
    <alternativeName>
        <fullName evidence="1">RNA polymerase subunit alpha</fullName>
    </alternativeName>
    <alternativeName>
        <fullName evidence="1">Transcriptase subunit alpha</fullName>
    </alternativeName>
</protein>
<keyword id="KW-0240">DNA-directed RNA polymerase</keyword>
<keyword id="KW-0548">Nucleotidyltransferase</keyword>
<keyword id="KW-0804">Transcription</keyword>
<keyword id="KW-0808">Transferase</keyword>
<gene>
    <name evidence="1" type="primary">rpoA</name>
    <name type="ordered locus">Bcenmc03_0353</name>
</gene>
<organism>
    <name type="scientific">Burkholderia orbicola (strain MC0-3)</name>
    <dbReference type="NCBI Taxonomy" id="406425"/>
    <lineage>
        <taxon>Bacteria</taxon>
        <taxon>Pseudomonadati</taxon>
        <taxon>Pseudomonadota</taxon>
        <taxon>Betaproteobacteria</taxon>
        <taxon>Burkholderiales</taxon>
        <taxon>Burkholderiaceae</taxon>
        <taxon>Burkholderia</taxon>
        <taxon>Burkholderia cepacia complex</taxon>
        <taxon>Burkholderia orbicola</taxon>
    </lineage>
</organism>
<accession>B1JU48</accession>
<comment type="function">
    <text evidence="1">DNA-dependent RNA polymerase catalyzes the transcription of DNA into RNA using the four ribonucleoside triphosphates as substrates.</text>
</comment>
<comment type="catalytic activity">
    <reaction evidence="1">
        <text>RNA(n) + a ribonucleoside 5'-triphosphate = RNA(n+1) + diphosphate</text>
        <dbReference type="Rhea" id="RHEA:21248"/>
        <dbReference type="Rhea" id="RHEA-COMP:14527"/>
        <dbReference type="Rhea" id="RHEA-COMP:17342"/>
        <dbReference type="ChEBI" id="CHEBI:33019"/>
        <dbReference type="ChEBI" id="CHEBI:61557"/>
        <dbReference type="ChEBI" id="CHEBI:140395"/>
        <dbReference type="EC" id="2.7.7.6"/>
    </reaction>
</comment>
<comment type="subunit">
    <text evidence="1">Homodimer. The RNAP catalytic core consists of 2 alpha, 1 beta, 1 beta' and 1 omega subunit. When a sigma factor is associated with the core the holoenzyme is formed, which can initiate transcription.</text>
</comment>
<comment type="domain">
    <text evidence="1">The N-terminal domain is essential for RNAP assembly and basal transcription, whereas the C-terminal domain is involved in interaction with transcriptional regulators and with upstream promoter elements.</text>
</comment>
<comment type="similarity">
    <text evidence="1">Belongs to the RNA polymerase alpha chain family.</text>
</comment>
<feature type="chain" id="PRO_1000091926" description="DNA-directed RNA polymerase subunit alpha">
    <location>
        <begin position="1"/>
        <end position="325"/>
    </location>
</feature>
<feature type="region of interest" description="Alpha N-terminal domain (alpha-NTD)" evidence="1">
    <location>
        <begin position="1"/>
        <end position="231"/>
    </location>
</feature>
<feature type="region of interest" description="Alpha C-terminal domain (alpha-CTD)" evidence="1">
    <location>
        <begin position="246"/>
        <end position="325"/>
    </location>
</feature>
<sequence length="325" mass="35697">MQTSLLKPKIIAVESLGENHARVVMEPFERGYGHTLGNALRRVLLSSMVGYAPTEVTIAGVVHEYSTLDGVQEDVVNLLLNLKGVVFKLHNRDEVTVTLRKEGEGVVTAGDIELAHDCEVINPNHVIAHLSKGGKLDVQIKIEKGRGYVPGNVRRYGEDTAKIIGRIVLDASFSPVRRVSYAVESARVEQRTDLDKLVMNIETSGVITPEEAIRQSARILVDQLSVFAALEGTETAAEAPSRAPQIDPILLRPVDDLELTVRSANCLKAENIYYIGDLIQRTENELLKTPNLGRKSLNEIKEVLASRGLTLGMKLENWPPAGLDK</sequence>
<proteinExistence type="inferred from homology"/>